<comment type="function">
    <text evidence="1">Component of the MICOS complex, a large protein complex of the mitochondrial inner membrane that plays crucial roles in the maintenance of crista junctions, inner membrane architecture, and formation of contact sites to the outer membrane.</text>
</comment>
<comment type="subunit">
    <text evidence="1">Component of the mitochondrial contact site and cristae organizing system (MICOS) complex (also known as MINOS or MitOS complex).</text>
</comment>
<comment type="subcellular location">
    <subcellularLocation>
        <location evidence="1">Mitochondrion inner membrane</location>
        <topology evidence="1">Lipid-anchor</topology>
    </subcellularLocation>
</comment>
<comment type="alternative products">
    <event type="alternative splicing"/>
    <isoform>
        <id>Q5FVV3-1</id>
        <name>1</name>
        <sequence type="displayed"/>
    </isoform>
    <isoform>
        <id>Q5FVV3-2</id>
        <name>2</name>
        <sequence type="described" ref="VSP_042998"/>
    </isoform>
</comment>
<comment type="similarity">
    <text evidence="6">Belongs to the MICOS complex subunit Mic19 family. Metazoan Mic25 subfamily.</text>
</comment>
<comment type="sequence caution" evidence="6">
    <conflict type="erroneous initiation">
        <sequence resource="EMBL-CDS" id="AAH89756"/>
    </conflict>
    <text>Extended N-terminus.</text>
</comment>
<comment type="sequence caution" evidence="6">
    <conflict type="erroneous initiation">
        <sequence resource="EMBL-CDS" id="AAI21226"/>
    </conflict>
    <text>Extended N-terminus.</text>
</comment>
<comment type="sequence caution" evidence="6">
    <conflict type="erroneous initiation">
        <sequence resource="EMBL-CDS" id="AAI54065"/>
    </conflict>
    <text>Extended N-terminus.</text>
</comment>
<keyword id="KW-0025">Alternative splicing</keyword>
<keyword id="KW-0175">Coiled coil</keyword>
<keyword id="KW-1015">Disulfide bond</keyword>
<keyword id="KW-0449">Lipoprotein</keyword>
<keyword id="KW-0472">Membrane</keyword>
<keyword id="KW-0496">Mitochondrion</keyword>
<keyword id="KW-0999">Mitochondrion inner membrane</keyword>
<keyword id="KW-0519">Myristate</keyword>
<keyword id="KW-1185">Reference proteome</keyword>
<dbReference type="EMBL" id="AAMC01078073">
    <property type="status" value="NOT_ANNOTATED_CDS"/>
    <property type="molecule type" value="Genomic_DNA"/>
</dbReference>
<dbReference type="EMBL" id="AAMC01078074">
    <property type="status" value="NOT_ANNOTATED_CDS"/>
    <property type="molecule type" value="Genomic_DNA"/>
</dbReference>
<dbReference type="EMBL" id="AAMC01078075">
    <property type="status" value="NOT_ANNOTATED_CDS"/>
    <property type="molecule type" value="Genomic_DNA"/>
</dbReference>
<dbReference type="EMBL" id="AAMC01078076">
    <property type="status" value="NOT_ANNOTATED_CDS"/>
    <property type="molecule type" value="Genomic_DNA"/>
</dbReference>
<dbReference type="EMBL" id="AAMC01078077">
    <property type="status" value="NOT_ANNOTATED_CDS"/>
    <property type="molecule type" value="Genomic_DNA"/>
</dbReference>
<dbReference type="EMBL" id="AAMC01078078">
    <property type="status" value="NOT_ANNOTATED_CDS"/>
    <property type="molecule type" value="Genomic_DNA"/>
</dbReference>
<dbReference type="EMBL" id="AAMC01078079">
    <property type="status" value="NOT_ANNOTATED_CDS"/>
    <property type="molecule type" value="Genomic_DNA"/>
</dbReference>
<dbReference type="EMBL" id="AAMC01078080">
    <property type="status" value="NOT_ANNOTATED_CDS"/>
    <property type="molecule type" value="Genomic_DNA"/>
</dbReference>
<dbReference type="EMBL" id="AAMC01078081">
    <property type="status" value="NOT_ANNOTATED_CDS"/>
    <property type="molecule type" value="Genomic_DNA"/>
</dbReference>
<dbReference type="EMBL" id="AAMC01078082">
    <property type="status" value="NOT_ANNOTATED_CDS"/>
    <property type="molecule type" value="Genomic_DNA"/>
</dbReference>
<dbReference type="EMBL" id="AAMC01078083">
    <property type="status" value="NOT_ANNOTATED_CDS"/>
    <property type="molecule type" value="Genomic_DNA"/>
</dbReference>
<dbReference type="EMBL" id="AAMC01078084">
    <property type="status" value="NOT_ANNOTATED_CDS"/>
    <property type="molecule type" value="Genomic_DNA"/>
</dbReference>
<dbReference type="EMBL" id="AAMC01078085">
    <property type="status" value="NOT_ANNOTATED_CDS"/>
    <property type="molecule type" value="Genomic_DNA"/>
</dbReference>
<dbReference type="EMBL" id="AAMC01078086">
    <property type="status" value="NOT_ANNOTATED_CDS"/>
    <property type="molecule type" value="Genomic_DNA"/>
</dbReference>
<dbReference type="EMBL" id="BC089756">
    <property type="protein sequence ID" value="AAH89756.1"/>
    <property type="status" value="ALT_INIT"/>
    <property type="molecule type" value="mRNA"/>
</dbReference>
<dbReference type="EMBL" id="BC121225">
    <property type="protein sequence ID" value="AAI21226.1"/>
    <property type="status" value="ALT_INIT"/>
    <property type="molecule type" value="mRNA"/>
</dbReference>
<dbReference type="EMBL" id="BC154064">
    <property type="protein sequence ID" value="AAI54065.1"/>
    <property type="status" value="ALT_INIT"/>
    <property type="molecule type" value="mRNA"/>
</dbReference>
<dbReference type="SMR" id="Q5FVV3"/>
<dbReference type="FunCoup" id="Q5FVV3">
    <property type="interactions" value="720"/>
</dbReference>
<dbReference type="STRING" id="8364.ENSXETP00000021503"/>
<dbReference type="PaxDb" id="8364-ENSXETP00000019879"/>
<dbReference type="eggNOG" id="KOG4083">
    <property type="taxonomic scope" value="Eukaryota"/>
</dbReference>
<dbReference type="HOGENOM" id="CLU_049040_2_1_1"/>
<dbReference type="InParanoid" id="Q5FVV3"/>
<dbReference type="TreeFam" id="TF326279"/>
<dbReference type="Proteomes" id="UP000008143">
    <property type="component" value="Unplaced"/>
</dbReference>
<dbReference type="GO" id="GO:0061617">
    <property type="term" value="C:MICOS complex"/>
    <property type="evidence" value="ECO:0007669"/>
    <property type="project" value="InterPro"/>
</dbReference>
<dbReference type="GO" id="GO:0005743">
    <property type="term" value="C:mitochondrial inner membrane"/>
    <property type="evidence" value="ECO:0000250"/>
    <property type="project" value="UniProtKB"/>
</dbReference>
<dbReference type="GO" id="GO:0005739">
    <property type="term" value="C:mitochondrion"/>
    <property type="evidence" value="ECO:0000250"/>
    <property type="project" value="UniProtKB"/>
</dbReference>
<dbReference type="GO" id="GO:0042407">
    <property type="term" value="P:cristae formation"/>
    <property type="evidence" value="ECO:0000250"/>
    <property type="project" value="UniProtKB"/>
</dbReference>
<dbReference type="GO" id="GO:0006974">
    <property type="term" value="P:DNA damage response"/>
    <property type="evidence" value="ECO:0000250"/>
    <property type="project" value="UniProtKB"/>
</dbReference>
<dbReference type="InterPro" id="IPR007964">
    <property type="entry name" value="MIC19/MIC25"/>
</dbReference>
<dbReference type="InterPro" id="IPR042860">
    <property type="entry name" value="MIC25"/>
</dbReference>
<dbReference type="PANTHER" id="PTHR47609">
    <property type="entry name" value="MICOS COMPLEX SUBUNIT MIC25"/>
    <property type="match status" value="1"/>
</dbReference>
<dbReference type="PANTHER" id="PTHR47609:SF1">
    <property type="entry name" value="MICOS COMPLEX SUBUNIT MIC25"/>
    <property type="match status" value="1"/>
</dbReference>
<dbReference type="Pfam" id="PF05300">
    <property type="entry name" value="MIC19_MIC25"/>
    <property type="match status" value="1"/>
</dbReference>
<dbReference type="PROSITE" id="PS51808">
    <property type="entry name" value="CHCH"/>
    <property type="match status" value="1"/>
</dbReference>
<sequence length="253" mass="28395">MGGSESTGRKVSFGMDEEERVRVLRGVRLSDEVVNRMKDSDLPSKDQSTSAASGTASAPAAFPSKAGPSASHPASTSTGGAHKPTAAGVGQQYAEEDLYRRYEREQAIIQEELARLAKRERESAHEKLSASILLEKNSTNQERRKAEHLAKELEQKEAELQRLNTFYREQLSSIEKKNLEIYRLTAEQYHTAATNAELRVRQRSYDPVCMNLQADILKCYSENKQERLNCSNLAKEYRKCVSAAQKNLLFNHG</sequence>
<name>MIC25_XENTR</name>
<accession>Q5FVV3</accession>
<accession>A8KBD0</accession>
<accession>Q0VA68</accession>
<organism>
    <name type="scientific">Xenopus tropicalis</name>
    <name type="common">Western clawed frog</name>
    <name type="synonym">Silurana tropicalis</name>
    <dbReference type="NCBI Taxonomy" id="8364"/>
    <lineage>
        <taxon>Eukaryota</taxon>
        <taxon>Metazoa</taxon>
        <taxon>Chordata</taxon>
        <taxon>Craniata</taxon>
        <taxon>Vertebrata</taxon>
        <taxon>Euteleostomi</taxon>
        <taxon>Amphibia</taxon>
        <taxon>Batrachia</taxon>
        <taxon>Anura</taxon>
        <taxon>Pipoidea</taxon>
        <taxon>Pipidae</taxon>
        <taxon>Xenopodinae</taxon>
        <taxon>Xenopus</taxon>
        <taxon>Silurana</taxon>
    </lineage>
</organism>
<reference key="1">
    <citation type="journal article" date="2010" name="Science">
        <title>The genome of the Western clawed frog Xenopus tropicalis.</title>
        <authorList>
            <person name="Hellsten U."/>
            <person name="Harland R.M."/>
            <person name="Gilchrist M.J."/>
            <person name="Hendrix D."/>
            <person name="Jurka J."/>
            <person name="Kapitonov V."/>
            <person name="Ovcharenko I."/>
            <person name="Putnam N.H."/>
            <person name="Shu S."/>
            <person name="Taher L."/>
            <person name="Blitz I.L."/>
            <person name="Blumberg B."/>
            <person name="Dichmann D.S."/>
            <person name="Dubchak I."/>
            <person name="Amaya E."/>
            <person name="Detter J.C."/>
            <person name="Fletcher R."/>
            <person name="Gerhard D.S."/>
            <person name="Goodstein D."/>
            <person name="Graves T."/>
            <person name="Grigoriev I.V."/>
            <person name="Grimwood J."/>
            <person name="Kawashima T."/>
            <person name="Lindquist E."/>
            <person name="Lucas S.M."/>
            <person name="Mead P.E."/>
            <person name="Mitros T."/>
            <person name="Ogino H."/>
            <person name="Ohta Y."/>
            <person name="Poliakov A.V."/>
            <person name="Pollet N."/>
            <person name="Robert J."/>
            <person name="Salamov A."/>
            <person name="Sater A.K."/>
            <person name="Schmutz J."/>
            <person name="Terry A."/>
            <person name="Vize P.D."/>
            <person name="Warren W.C."/>
            <person name="Wells D."/>
            <person name="Wills A."/>
            <person name="Wilson R.K."/>
            <person name="Zimmerman L.B."/>
            <person name="Zorn A.M."/>
            <person name="Grainger R."/>
            <person name="Grammer T."/>
            <person name="Khokha M.K."/>
            <person name="Richardson P.M."/>
            <person name="Rokhsar D.S."/>
        </authorList>
    </citation>
    <scope>NUCLEOTIDE SEQUENCE [LARGE SCALE GENOMIC DNA]</scope>
</reference>
<reference key="2">
    <citation type="submission" date="2005-02" db="EMBL/GenBank/DDBJ databases">
        <authorList>
            <consortium name="NIH - Xenopus Gene Collection (XGC) project"/>
        </authorList>
    </citation>
    <scope>NUCLEOTIDE SEQUENCE [LARGE SCALE MRNA] (ISOFORMS 1 AND 2)</scope>
    <source>
        <tissue>Brain</tissue>
    </source>
</reference>
<evidence type="ECO:0000250" key="1">
    <source>
        <dbReference type="UniProtKB" id="Q9BRQ6"/>
    </source>
</evidence>
<evidence type="ECO:0000255" key="2"/>
<evidence type="ECO:0000255" key="3">
    <source>
        <dbReference type="PROSITE-ProRule" id="PRU01150"/>
    </source>
</evidence>
<evidence type="ECO:0000256" key="4">
    <source>
        <dbReference type="SAM" id="MobiDB-lite"/>
    </source>
</evidence>
<evidence type="ECO:0000303" key="5">
    <source ref="2"/>
</evidence>
<evidence type="ECO:0000305" key="6"/>
<gene>
    <name type="primary">chchd6</name>
    <name type="synonym">mic25</name>
</gene>
<proteinExistence type="evidence at transcript level"/>
<protein>
    <recommendedName>
        <fullName>MICOS complex subunit mic25</fullName>
    </recommendedName>
    <alternativeName>
        <fullName>Coiled-coil-helix-coiled-coil-helix domain-containing protein 6</fullName>
    </alternativeName>
</protein>
<feature type="initiator methionine" description="Removed" evidence="2">
    <location>
        <position position="1"/>
    </location>
</feature>
<feature type="chain" id="PRO_0000416913" description="MICOS complex subunit mic25">
    <location>
        <begin position="2"/>
        <end position="253"/>
    </location>
</feature>
<feature type="domain" description="CHCH" evidence="3">
    <location>
        <begin position="206"/>
        <end position="248"/>
    </location>
</feature>
<feature type="region of interest" description="Disordered" evidence="4">
    <location>
        <begin position="1"/>
        <end position="89"/>
    </location>
</feature>
<feature type="coiled-coil region" evidence="2">
    <location>
        <begin position="94"/>
        <end position="178"/>
    </location>
</feature>
<feature type="short sequence motif" description="Cx9C motif 1" evidence="3">
    <location>
        <begin position="209"/>
        <end position="219"/>
    </location>
</feature>
<feature type="short sequence motif" description="Cx9C motif 2" evidence="3">
    <location>
        <begin position="230"/>
        <end position="240"/>
    </location>
</feature>
<feature type="compositionally biased region" description="Basic and acidic residues" evidence="4">
    <location>
        <begin position="28"/>
        <end position="44"/>
    </location>
</feature>
<feature type="compositionally biased region" description="Low complexity" evidence="4">
    <location>
        <begin position="48"/>
        <end position="64"/>
    </location>
</feature>
<feature type="lipid moiety-binding region" description="N-myristoyl glycine" evidence="2">
    <location>
        <position position="2"/>
    </location>
</feature>
<feature type="disulfide bond" evidence="3">
    <location>
        <begin position="209"/>
        <end position="240"/>
    </location>
</feature>
<feature type="disulfide bond" evidence="3">
    <location>
        <begin position="219"/>
        <end position="230"/>
    </location>
</feature>
<feature type="splice variant" id="VSP_042998" description="In isoform 2." evidence="5">
    <original>L</original>
    <variation>LPADLDEW</variation>
    <location>
        <position position="149"/>
    </location>
</feature>